<proteinExistence type="inferred from homology"/>
<protein>
    <recommendedName>
        <fullName evidence="3">Protein TolB homolog</fullName>
    </recommendedName>
</protein>
<gene>
    <name type="primary">tolB</name>
    <name type="ordered locus">pc1850</name>
</gene>
<keyword id="KW-0574">Periplasm</keyword>
<keyword id="KW-1185">Reference proteome</keyword>
<keyword id="KW-0732">Signal</keyword>
<name>TOLB_PARUW</name>
<feature type="signal peptide" evidence="2">
    <location>
        <begin position="1"/>
        <end position="30"/>
    </location>
</feature>
<feature type="chain" id="PRO_0000034668" description="Protein TolB homolog" evidence="2">
    <location>
        <begin position="31"/>
        <end position="469"/>
    </location>
</feature>
<organism>
    <name type="scientific">Protochlamydia amoebophila (strain UWE25)</name>
    <dbReference type="NCBI Taxonomy" id="264201"/>
    <lineage>
        <taxon>Bacteria</taxon>
        <taxon>Pseudomonadati</taxon>
        <taxon>Chlamydiota</taxon>
        <taxon>Chlamydiia</taxon>
        <taxon>Parachlamydiales</taxon>
        <taxon>Parachlamydiaceae</taxon>
        <taxon>Candidatus Protochlamydia</taxon>
    </lineage>
</organism>
<evidence type="ECO:0000250" key="1">
    <source>
        <dbReference type="UniProtKB" id="P0A855"/>
    </source>
</evidence>
<evidence type="ECO:0000255" key="2"/>
<evidence type="ECO:0000305" key="3"/>
<sequence>MYAFFFKTSNHWIQFLICFCLSLAPFFAHSIDEDPIVVRLSTDSSLVPLYLAPFTIEQTNFSPSYLKQLEDILTFDLNHNGSTYLSKRNASNDQLANAGELEDLGIAQTWQAQNIFYVIKGIIKENFLQVFILNTNTQNLKKCDPVMLTGDLSQDRRLIHRIADTIHKALFGVEGVASTKILYTVKTPLVDNKQKLSSEVWEADYDGENARQITQEKSFCVNPTYIPPKKGFLSGNFLYVSYQAGQSKIYIANLKDGKGQRLLKLKGNQLMPTLSQQRDKIAFISDATGNPDLFLQLFNPETGVVGKPQQIFSAKLATQSTPSFNPDGTKVAFVSDKDGSPKIYVIAIPEPGTSLKNIKATLITKRNRESSAPAWSPDGTKIAYCSRTDGIRQIWIYDFTTNQEKQLTQGPINKENPSWAPNSLHLVYNSADTNDSQLYLINLNQTEATRITSGKGEKRYPNWELRFDR</sequence>
<comment type="subcellular location">
    <subcellularLocation>
        <location evidence="1">Periplasm</location>
    </subcellularLocation>
</comment>
<comment type="similarity">
    <text evidence="3">Belongs to the TolB family.</text>
</comment>
<dbReference type="EMBL" id="BX908798">
    <property type="protein sequence ID" value="CAF24574.1"/>
    <property type="molecule type" value="Genomic_DNA"/>
</dbReference>
<dbReference type="RefSeq" id="WP_011176395.1">
    <property type="nucleotide sequence ID" value="NC_005861.2"/>
</dbReference>
<dbReference type="SMR" id="Q6MA25"/>
<dbReference type="STRING" id="264201.pc1850"/>
<dbReference type="KEGG" id="pcu:PC_RS08870"/>
<dbReference type="eggNOG" id="COG0823">
    <property type="taxonomic scope" value="Bacteria"/>
</dbReference>
<dbReference type="HOGENOM" id="CLU_635688_0_0_0"/>
<dbReference type="OrthoDB" id="108903at2"/>
<dbReference type="Proteomes" id="UP000000529">
    <property type="component" value="Chromosome"/>
</dbReference>
<dbReference type="GO" id="GO:0042597">
    <property type="term" value="C:periplasmic space"/>
    <property type="evidence" value="ECO:0007669"/>
    <property type="project" value="UniProtKB-SubCell"/>
</dbReference>
<dbReference type="Gene3D" id="2.120.10.30">
    <property type="entry name" value="TolB, C-terminal domain"/>
    <property type="match status" value="2"/>
</dbReference>
<dbReference type="Gene3D" id="3.40.50.10070">
    <property type="entry name" value="TolB, N-terminal domain"/>
    <property type="match status" value="1"/>
</dbReference>
<dbReference type="InterPro" id="IPR011042">
    <property type="entry name" value="6-blade_b-propeller_TolB-like"/>
</dbReference>
<dbReference type="InterPro" id="IPR011659">
    <property type="entry name" value="PD40"/>
</dbReference>
<dbReference type="NCBIfam" id="NF002183">
    <property type="entry name" value="PRK01029.1"/>
    <property type="match status" value="1"/>
</dbReference>
<dbReference type="PANTHER" id="PTHR36842:SF1">
    <property type="entry name" value="PROTEIN TOLB"/>
    <property type="match status" value="1"/>
</dbReference>
<dbReference type="PANTHER" id="PTHR36842">
    <property type="entry name" value="PROTEIN TOLB HOMOLOG"/>
    <property type="match status" value="1"/>
</dbReference>
<dbReference type="Pfam" id="PF07676">
    <property type="entry name" value="PD40"/>
    <property type="match status" value="3"/>
</dbReference>
<dbReference type="SUPFAM" id="SSF52964">
    <property type="entry name" value="TolB, N-terminal domain"/>
    <property type="match status" value="1"/>
</dbReference>
<dbReference type="SUPFAM" id="SSF69304">
    <property type="entry name" value="Tricorn protease N-terminal domain"/>
    <property type="match status" value="1"/>
</dbReference>
<reference key="1">
    <citation type="journal article" date="2004" name="Science">
        <title>Illuminating the evolutionary history of chlamydiae.</title>
        <authorList>
            <person name="Horn M."/>
            <person name="Collingro A."/>
            <person name="Schmitz-Esser S."/>
            <person name="Beier C.L."/>
            <person name="Purkhold U."/>
            <person name="Fartmann B."/>
            <person name="Brandt P."/>
            <person name="Nyakatura G.J."/>
            <person name="Droege M."/>
            <person name="Frishman D."/>
            <person name="Rattei T."/>
            <person name="Mewes H.-W."/>
            <person name="Wagner M."/>
        </authorList>
    </citation>
    <scope>NUCLEOTIDE SEQUENCE [LARGE SCALE GENOMIC DNA]</scope>
    <source>
        <strain>UWE25</strain>
    </source>
</reference>
<accession>Q6MA25</accession>